<keyword id="KW-0029">Amino-acid transport</keyword>
<keyword id="KW-0325">Glycoprotein</keyword>
<keyword id="KW-0458">Lysosome</keyword>
<keyword id="KW-0472">Membrane</keyword>
<keyword id="KW-0597">Phosphoprotein</keyword>
<keyword id="KW-1267">Proteomics identification</keyword>
<keyword id="KW-1185">Reference proteome</keyword>
<keyword id="KW-0682">Retinitis pigmentosa</keyword>
<keyword id="KW-0812">Transmembrane</keyword>
<keyword id="KW-1133">Transmembrane helix</keyword>
<keyword id="KW-0813">Transport</keyword>
<dbReference type="EMBL" id="AK122655">
    <property type="protein sequence ID" value="BAG53645.1"/>
    <property type="molecule type" value="mRNA"/>
</dbReference>
<dbReference type="EMBL" id="AC008041">
    <property type="status" value="NOT_ANNOTATED_CDS"/>
    <property type="molecule type" value="Genomic_DNA"/>
</dbReference>
<dbReference type="EMBL" id="BC022968">
    <property type="protein sequence ID" value="AAH22968.2"/>
    <property type="molecule type" value="mRNA"/>
</dbReference>
<dbReference type="EMBL" id="AB046833">
    <property type="protein sequence ID" value="BAB13439.1"/>
    <property type="status" value="ALT_SEQ"/>
    <property type="molecule type" value="mRNA"/>
</dbReference>
<dbReference type="CCDS" id="CCDS33892.1"/>
<dbReference type="RefSeq" id="NP_066000.2">
    <property type="nucleotide sequence ID" value="NM_020949.3"/>
</dbReference>
<dbReference type="SMR" id="Q8TBB6"/>
<dbReference type="BioGRID" id="121733">
    <property type="interactions" value="77"/>
</dbReference>
<dbReference type="FunCoup" id="Q8TBB6">
    <property type="interactions" value="427"/>
</dbReference>
<dbReference type="IntAct" id="Q8TBB6">
    <property type="interactions" value="70"/>
</dbReference>
<dbReference type="STRING" id="9606.ENSP00000231706"/>
<dbReference type="TCDB" id="2.A.3.3.7">
    <property type="family name" value="the amino acid-polyamine-organocation (apc) family"/>
</dbReference>
<dbReference type="GlyCosmos" id="Q8TBB6">
    <property type="glycosylation" value="2 sites, No reported glycans"/>
</dbReference>
<dbReference type="GlyGen" id="Q8TBB6">
    <property type="glycosylation" value="3 sites"/>
</dbReference>
<dbReference type="iPTMnet" id="Q8TBB6"/>
<dbReference type="PhosphoSitePlus" id="Q8TBB6"/>
<dbReference type="SwissPalm" id="Q8TBB6"/>
<dbReference type="BioMuta" id="SLC7A14"/>
<dbReference type="DMDM" id="296452968"/>
<dbReference type="jPOST" id="Q8TBB6"/>
<dbReference type="MassIVE" id="Q8TBB6"/>
<dbReference type="PaxDb" id="9606-ENSP00000231706"/>
<dbReference type="PeptideAtlas" id="Q8TBB6"/>
<dbReference type="ProteomicsDB" id="73987"/>
<dbReference type="Antibodypedia" id="18672">
    <property type="antibodies" value="54 antibodies from 18 providers"/>
</dbReference>
<dbReference type="DNASU" id="57709"/>
<dbReference type="Ensembl" id="ENST00000231706.6">
    <property type="protein sequence ID" value="ENSP00000231706.4"/>
    <property type="gene ID" value="ENSG00000013293.6"/>
</dbReference>
<dbReference type="GeneID" id="57709"/>
<dbReference type="KEGG" id="hsa:57709"/>
<dbReference type="MANE-Select" id="ENST00000231706.6">
    <property type="protein sequence ID" value="ENSP00000231706.4"/>
    <property type="RefSeq nucleotide sequence ID" value="NM_020949.3"/>
    <property type="RefSeq protein sequence ID" value="NP_066000.2"/>
</dbReference>
<dbReference type="UCSC" id="uc003fgz.3">
    <property type="organism name" value="human"/>
</dbReference>
<dbReference type="AGR" id="HGNC:29326"/>
<dbReference type="CTD" id="57709"/>
<dbReference type="DisGeNET" id="57709"/>
<dbReference type="GeneCards" id="SLC7A14"/>
<dbReference type="HGNC" id="HGNC:29326">
    <property type="gene designation" value="SLC7A14"/>
</dbReference>
<dbReference type="HPA" id="ENSG00000013293">
    <property type="expression patterns" value="Group enriched (brain, pituitary gland, retina)"/>
</dbReference>
<dbReference type="MalaCards" id="SLC7A14"/>
<dbReference type="MIM" id="615720">
    <property type="type" value="gene"/>
</dbReference>
<dbReference type="MIM" id="615725">
    <property type="type" value="phenotype"/>
</dbReference>
<dbReference type="neXtProt" id="NX_Q8TBB6"/>
<dbReference type="OpenTargets" id="ENSG00000013293"/>
<dbReference type="Orphanet" id="791">
    <property type="disease" value="Retinitis pigmentosa"/>
</dbReference>
<dbReference type="PharmGKB" id="PA142670913"/>
<dbReference type="VEuPathDB" id="HostDB:ENSG00000013293"/>
<dbReference type="eggNOG" id="KOG1286">
    <property type="taxonomic scope" value="Eukaryota"/>
</dbReference>
<dbReference type="GeneTree" id="ENSGT00940000155893"/>
<dbReference type="HOGENOM" id="CLU_007946_15_7_1"/>
<dbReference type="InParanoid" id="Q8TBB6"/>
<dbReference type="OMA" id="GFVMYFY"/>
<dbReference type="OrthoDB" id="3900342at2759"/>
<dbReference type="PAN-GO" id="Q8TBB6">
    <property type="GO annotations" value="3 GO annotations based on evolutionary models"/>
</dbReference>
<dbReference type="PhylomeDB" id="Q8TBB6"/>
<dbReference type="TreeFam" id="TF315212"/>
<dbReference type="PathwayCommons" id="Q8TBB6"/>
<dbReference type="SignaLink" id="Q8TBB6"/>
<dbReference type="BioGRID-ORCS" id="57709">
    <property type="hits" value="7 hits in 1147 CRISPR screens"/>
</dbReference>
<dbReference type="ChiTaRS" id="SLC7A14">
    <property type="organism name" value="human"/>
</dbReference>
<dbReference type="GenomeRNAi" id="57709"/>
<dbReference type="Pharos" id="Q8TBB6">
    <property type="development level" value="Tbio"/>
</dbReference>
<dbReference type="PRO" id="PR:Q8TBB6"/>
<dbReference type="Proteomes" id="UP000005640">
    <property type="component" value="Chromosome 3"/>
</dbReference>
<dbReference type="RNAct" id="Q8TBB6">
    <property type="molecule type" value="protein"/>
</dbReference>
<dbReference type="Bgee" id="ENSG00000013293">
    <property type="expression patterns" value="Expressed in cerebellar vermis and 107 other cell types or tissues"/>
</dbReference>
<dbReference type="GO" id="GO:0005829">
    <property type="term" value="C:cytosol"/>
    <property type="evidence" value="ECO:0000314"/>
    <property type="project" value="HPA"/>
</dbReference>
<dbReference type="GO" id="GO:0043231">
    <property type="term" value="C:intracellular membrane-bounded organelle"/>
    <property type="evidence" value="ECO:0000314"/>
    <property type="project" value="HPA"/>
</dbReference>
<dbReference type="GO" id="GO:0005765">
    <property type="term" value="C:lysosomal membrane"/>
    <property type="evidence" value="ECO:0000250"/>
    <property type="project" value="UniProtKB"/>
</dbReference>
<dbReference type="GO" id="GO:0005654">
    <property type="term" value="C:nucleoplasm"/>
    <property type="evidence" value="ECO:0000314"/>
    <property type="project" value="HPA"/>
</dbReference>
<dbReference type="GO" id="GO:0005886">
    <property type="term" value="C:plasma membrane"/>
    <property type="evidence" value="ECO:0000314"/>
    <property type="project" value="HPA"/>
</dbReference>
<dbReference type="GO" id="GO:0015171">
    <property type="term" value="F:amino acid transmembrane transporter activity"/>
    <property type="evidence" value="ECO:0000318"/>
    <property type="project" value="GO_Central"/>
</dbReference>
<dbReference type="GO" id="GO:0015185">
    <property type="term" value="F:gamma-aminobutyric acid transmembrane transporter activity"/>
    <property type="evidence" value="ECO:0000250"/>
    <property type="project" value="UniProtKB"/>
</dbReference>
<dbReference type="GO" id="GO:0006865">
    <property type="term" value="P:amino acid transport"/>
    <property type="evidence" value="ECO:0000318"/>
    <property type="project" value="GO_Central"/>
</dbReference>
<dbReference type="GO" id="GO:0051939">
    <property type="term" value="P:gamma-aminobutyric acid import"/>
    <property type="evidence" value="ECO:0000250"/>
    <property type="project" value="UniProtKB"/>
</dbReference>
<dbReference type="FunFam" id="1.20.1740.10:FF:000024">
    <property type="entry name" value="High affinity cationic amino acid transporter 1"/>
    <property type="match status" value="1"/>
</dbReference>
<dbReference type="FunFam" id="1.20.1740.10:FF:000010">
    <property type="entry name" value="probable cationic amino acid transporter"/>
    <property type="match status" value="1"/>
</dbReference>
<dbReference type="Gene3D" id="1.20.1740.10">
    <property type="entry name" value="Amino acid/polyamine transporter I"/>
    <property type="match status" value="1"/>
</dbReference>
<dbReference type="InterPro" id="IPR002293">
    <property type="entry name" value="AA/rel_permease1"/>
</dbReference>
<dbReference type="InterPro" id="IPR029485">
    <property type="entry name" value="CAT_C"/>
</dbReference>
<dbReference type="PANTHER" id="PTHR43243:SF17">
    <property type="entry name" value="CATIONIC AMINO ACID TRANSPORTER-RELATED"/>
    <property type="match status" value="1"/>
</dbReference>
<dbReference type="PANTHER" id="PTHR43243">
    <property type="entry name" value="INNER MEMBRANE TRANSPORTER YGJI-RELATED"/>
    <property type="match status" value="1"/>
</dbReference>
<dbReference type="Pfam" id="PF13520">
    <property type="entry name" value="AA_permease_2"/>
    <property type="match status" value="1"/>
</dbReference>
<dbReference type="Pfam" id="PF13906">
    <property type="entry name" value="AA_permease_C"/>
    <property type="match status" value="1"/>
</dbReference>
<comment type="function">
    <text evidence="2">Imports 4-aminobutanoate (GABA) into lysosomes. May act as a GABA sensor that regulates mTORC2-dependent INS signaling and gluconeogenesis. The transport mechanism and substrate selectivity remain to be elucidated.</text>
</comment>
<comment type="catalytic activity">
    <reaction evidence="2">
        <text>4-aminobutanoate(in) = 4-aminobutanoate(out)</text>
        <dbReference type="Rhea" id="RHEA:35035"/>
        <dbReference type="ChEBI" id="CHEBI:59888"/>
    </reaction>
    <physiologicalReaction direction="right-to-left" evidence="2">
        <dbReference type="Rhea" id="RHEA:35037"/>
    </physiologicalReaction>
</comment>
<comment type="interaction">
    <interactant intactId="EBI-5235586">
        <id>Q8TBB6</id>
    </interactant>
    <interactant intactId="EBI-2876927">
        <id>Q9ULC5</id>
        <label>ACSL5</label>
    </interactant>
    <organismsDiffer>false</organismsDiffer>
    <experiments>3</experiments>
</comment>
<comment type="interaction">
    <interactant intactId="EBI-5235586">
        <id>Q8TBB6</id>
    </interactant>
    <interactant intactId="EBI-11277970">
        <id>Q9UHX3</id>
        <label>ADGRE2</label>
    </interactant>
    <organismsDiffer>false</organismsDiffer>
    <experiments>3</experiments>
</comment>
<comment type="interaction">
    <interactant intactId="EBI-5235586">
        <id>Q8TBB6</id>
    </interactant>
    <interactant intactId="EBI-11522760">
        <id>Q6RW13-2</id>
        <label>AGTRAP</label>
    </interactant>
    <organismsDiffer>false</organismsDiffer>
    <experiments>3</experiments>
</comment>
<comment type="interaction">
    <interactant intactId="EBI-5235586">
        <id>Q8TBB6</id>
    </interactant>
    <interactant intactId="EBI-11957045">
        <id>Q9NVV5-2</id>
        <label>AIG1</label>
    </interactant>
    <organismsDiffer>false</organismsDiffer>
    <experiments>3</experiments>
</comment>
<comment type="interaction">
    <interactant intactId="EBI-5235586">
        <id>Q8TBB6</id>
    </interactant>
    <interactant intactId="EBI-11976321">
        <id>O95236-2</id>
        <label>APOL3</label>
    </interactant>
    <organismsDiffer>false</organismsDiffer>
    <experiments>3</experiments>
</comment>
<comment type="interaction">
    <interactant intactId="EBI-5235586">
        <id>Q8TBB6</id>
    </interactant>
    <interactant intactId="EBI-749204">
        <id>O15155</id>
        <label>BET1</label>
    </interactant>
    <organismsDiffer>false</organismsDiffer>
    <experiments>3</experiments>
</comment>
<comment type="interaction">
    <interactant intactId="EBI-5235586">
        <id>Q8TBB6</id>
    </interactant>
    <interactant intactId="EBI-4402847">
        <id>Q12981</id>
        <label>BNIP1</label>
    </interactant>
    <organismsDiffer>false</organismsDiffer>
    <experiments>3</experiments>
</comment>
<comment type="interaction">
    <interactant intactId="EBI-5235586">
        <id>Q8TBB6</id>
    </interactant>
    <interactant intactId="EBI-752094">
        <id>Q12982</id>
        <label>BNIP2</label>
    </interactant>
    <organismsDiffer>false</organismsDiffer>
    <experiments>3</experiments>
</comment>
<comment type="interaction">
    <interactant intactId="EBI-5235586">
        <id>Q8TBB6</id>
    </interactant>
    <interactant intactId="EBI-3953638">
        <id>P27352</id>
        <label>CBLIF</label>
    </interactant>
    <organismsDiffer>false</organismsDiffer>
    <experiments>3</experiments>
</comment>
<comment type="interaction">
    <interactant intactId="EBI-5235586">
        <id>Q8TBB6</id>
    </interactant>
    <interactant intactId="EBI-9083477">
        <id>Q9P0B6</id>
        <label>CCDC167</label>
    </interactant>
    <organismsDiffer>false</organismsDiffer>
    <experiments>3</experiments>
</comment>
<comment type="interaction">
    <interactant intactId="EBI-5235586">
        <id>Q8TBB6</id>
    </interactant>
    <interactant intactId="EBI-10271156">
        <id>Q8NHW4</id>
        <label>CCL4L2</label>
    </interactant>
    <organismsDiffer>false</organismsDiffer>
    <experiments>3</experiments>
</comment>
<comment type="interaction">
    <interactant intactId="EBI-5235586">
        <id>Q8TBB6</id>
    </interactant>
    <interactant intactId="EBI-6657396">
        <id>P19397</id>
        <label>CD53</label>
    </interactant>
    <organismsDiffer>false</organismsDiffer>
    <experiments>3</experiments>
</comment>
<comment type="interaction">
    <interactant intactId="EBI-5235586">
        <id>Q8TBB6</id>
    </interactant>
    <interactant intactId="EBI-11522780">
        <id>Q96DZ9-2</id>
        <label>CMTM5</label>
    </interactant>
    <organismsDiffer>false</organismsDiffer>
    <experiments>3</experiments>
</comment>
<comment type="interaction">
    <interactant intactId="EBI-5235586">
        <id>Q8TBB6</id>
    </interactant>
    <interactant intactId="EBI-12135455">
        <id>Q96PD2-2</id>
        <label>DCBLD2</label>
    </interactant>
    <organismsDiffer>false</organismsDiffer>
    <experiments>3</experiments>
</comment>
<comment type="interaction">
    <interactant intactId="EBI-5235586">
        <id>Q8TBB6</id>
    </interactant>
    <interactant intactId="EBI-398977">
        <id>Q9BUN8</id>
        <label>DERL1</label>
    </interactant>
    <organismsDiffer>false</organismsDiffer>
    <experiments>3</experiments>
</comment>
<comment type="interaction">
    <interactant intactId="EBI-5235586">
        <id>Q8TBB6</id>
    </interactant>
    <interactant intactId="EBI-13052900">
        <id>Q5NDL2-3</id>
        <label>EOGT</label>
    </interactant>
    <organismsDiffer>false</organismsDiffer>
    <experiments>3</experiments>
</comment>
<comment type="interaction">
    <interactant intactId="EBI-5235586">
        <id>Q8TBB6</id>
    </interactant>
    <interactant intactId="EBI-10976398">
        <id>Q7Z2K6</id>
        <label>ERMP1</label>
    </interactant>
    <organismsDiffer>false</organismsDiffer>
    <experiments>3</experiments>
</comment>
<comment type="interaction">
    <interactant intactId="EBI-5235586">
        <id>Q8TBB6</id>
    </interactant>
    <interactant intactId="EBI-18304435">
        <id>Q5JX71</id>
        <label>FAM209A</label>
    </interactant>
    <organismsDiffer>false</organismsDiffer>
    <experiments>3</experiments>
</comment>
<comment type="interaction">
    <interactant intactId="EBI-5235586">
        <id>Q8TBB6</id>
    </interactant>
    <interactant intactId="EBI-11090967">
        <id>O75063</id>
        <label>FAM20B</label>
    </interactant>
    <organismsDiffer>false</organismsDiffer>
    <experiments>3</experiments>
</comment>
<comment type="interaction">
    <interactant intactId="EBI-5235586">
        <id>Q8TBB6</id>
    </interactant>
    <interactant intactId="EBI-743099">
        <id>Q969F0</id>
        <label>FATE1</label>
    </interactant>
    <organismsDiffer>false</organismsDiffer>
    <experiments>3</experiments>
</comment>
<comment type="interaction">
    <interactant intactId="EBI-5235586">
        <id>Q8TBB6</id>
    </interactant>
    <interactant intactId="EBI-3918971">
        <id>Q9Y680</id>
        <label>FKBP7</label>
    </interactant>
    <organismsDiffer>false</organismsDiffer>
    <experiments>3</experiments>
</comment>
<comment type="interaction">
    <interactant intactId="EBI-5235586">
        <id>Q8TBB6</id>
    </interactant>
    <interactant intactId="EBI-1031656">
        <id>Q13651</id>
        <label>IL10RA</label>
    </interactant>
    <organismsDiffer>false</organismsDiffer>
    <experiments>3</experiments>
</comment>
<comment type="interaction">
    <interactant intactId="EBI-5235586">
        <id>Q8TBB6</id>
    </interactant>
    <interactant intactId="EBI-12241118">
        <id>Q16873</id>
        <label>LTC4S</label>
    </interactant>
    <organismsDiffer>false</organismsDiffer>
    <experiments>3</experiments>
</comment>
<comment type="interaction">
    <interactant intactId="EBI-5235586">
        <id>Q8TBB6</id>
    </interactant>
    <interactant intactId="EBI-11956541">
        <id>Q9GZY8-5</id>
        <label>MFF</label>
    </interactant>
    <organismsDiffer>false</organismsDiffer>
    <experiments>3</experiments>
</comment>
<comment type="interaction">
    <interactant intactId="EBI-5235586">
        <id>Q8TBB6</id>
    </interactant>
    <interactant intactId="EBI-12866138">
        <id>A0A0C4DFN3</id>
        <label>MGLL</label>
    </interactant>
    <organismsDiffer>false</organismsDiffer>
    <experiments>3</experiments>
</comment>
<comment type="interaction">
    <interactant intactId="EBI-5235586">
        <id>Q8TBB6</id>
    </interactant>
    <interactant intactId="EBI-6163737">
        <id>Q8N4V1</id>
        <label>MMGT1</label>
    </interactant>
    <organismsDiffer>false</organismsDiffer>
    <experiments>3</experiments>
</comment>
<comment type="interaction">
    <interactant intactId="EBI-5235586">
        <id>Q8TBB6</id>
    </interactant>
    <interactant intactId="EBI-10317425">
        <id>Q9NZG7</id>
        <label>NINJ2</label>
    </interactant>
    <organismsDiffer>false</organismsDiffer>
    <experiments>3</experiments>
</comment>
<comment type="interaction">
    <interactant intactId="EBI-5235586">
        <id>Q8TBB6</id>
    </interactant>
    <interactant intactId="EBI-6380741">
        <id>P42857</id>
        <label>NSG1</label>
    </interactant>
    <organismsDiffer>false</organismsDiffer>
    <experiments>3</experiments>
</comment>
<comment type="interaction">
    <interactant intactId="EBI-5235586">
        <id>Q8TBB6</id>
    </interactant>
    <interactant intactId="EBI-11721828">
        <id>Q8IY26</id>
        <label>PLPP6</label>
    </interactant>
    <organismsDiffer>false</organismsDiffer>
    <experiments>3</experiments>
</comment>
<comment type="interaction">
    <interactant intactId="EBI-5235586">
        <id>Q8TBB6</id>
    </interactant>
    <interactant intactId="EBI-10173935">
        <id>A5D903</id>
        <label>PRB1</label>
    </interactant>
    <organismsDiffer>false</organismsDiffer>
    <experiments>3</experiments>
</comment>
<comment type="interaction">
    <interactant intactId="EBI-5235586">
        <id>Q8TBB6</id>
    </interactant>
    <interactant intactId="EBI-12056025">
        <id>Q14162</id>
        <label>SCARF1</label>
    </interactant>
    <organismsDiffer>false</organismsDiffer>
    <experiments>3</experiments>
</comment>
<comment type="interaction">
    <interactant intactId="EBI-5235586">
        <id>Q8TBB6</id>
    </interactant>
    <interactant intactId="EBI-2684237">
        <id>O00767</id>
        <label>SCD</label>
    </interactant>
    <organismsDiffer>false</organismsDiffer>
    <experiments>3</experiments>
</comment>
<comment type="interaction">
    <interactant intactId="EBI-5235586">
        <id>Q8TBB6</id>
    </interactant>
    <interactant intactId="EBI-8640191">
        <id>Q9NRQ5</id>
        <label>SMCO4</label>
    </interactant>
    <organismsDiffer>false</organismsDiffer>
    <experiments>3</experiments>
</comment>
<comment type="interaction">
    <interactant intactId="EBI-5235586">
        <id>Q8TBB6</id>
    </interactant>
    <interactant intactId="EBI-2877718">
        <id>Q9NZ01</id>
        <label>TECR</label>
    </interactant>
    <organismsDiffer>false</organismsDiffer>
    <experiments>3</experiments>
</comment>
<comment type="interaction">
    <interactant intactId="EBI-5235586">
        <id>Q8TBB6</id>
    </interactant>
    <interactant intactId="EBI-10694905">
        <id>Q5BJH2-2</id>
        <label>TMEM128</label>
    </interactant>
    <organismsDiffer>false</organismsDiffer>
    <experiments>3</experiments>
</comment>
<comment type="interaction">
    <interactant intactId="EBI-5235586">
        <id>Q8TBB6</id>
    </interactant>
    <interactant intactId="EBI-16746122">
        <id>Q9NSU2-1</id>
        <label>TREX1</label>
    </interactant>
    <organismsDiffer>false</organismsDiffer>
    <experiments>3</experiments>
</comment>
<comment type="interaction">
    <interactant intactId="EBI-5235586">
        <id>Q8TBB6</id>
    </interactant>
    <interactant intactId="EBI-11988865">
        <id>A5PKU2</id>
        <label>TUSC5</label>
    </interactant>
    <organismsDiffer>false</organismsDiffer>
    <experiments>3</experiments>
</comment>
<comment type="interaction">
    <interactant intactId="EBI-5235586">
        <id>Q8TBB6</id>
    </interactant>
    <interactant intactId="EBI-2819725">
        <id>Q9Y5Z9</id>
        <label>UBIAD1</label>
    </interactant>
    <organismsDiffer>false</organismsDiffer>
    <experiments>3</experiments>
</comment>
<comment type="interaction">
    <interactant intactId="EBI-5235586">
        <id>Q8TBB6</id>
    </interactant>
    <interactant intactId="EBI-520113">
        <id>P63027</id>
        <label>VAMP2</label>
    </interactant>
    <organismsDiffer>false</organismsDiffer>
    <experiments>3</experiments>
</comment>
<comment type="interaction">
    <interactant intactId="EBI-5235586">
        <id>Q8TBB6</id>
    </interactant>
    <interactant intactId="EBI-6256462">
        <id>Q9BQB6</id>
        <label>VKORC1</label>
    </interactant>
    <organismsDiffer>false</organismsDiffer>
    <experiments>3</experiments>
</comment>
<comment type="interaction">
    <interactant intactId="EBI-5235586">
        <id>Q8TBB6</id>
    </interactant>
    <interactant intactId="EBI-751253">
        <id>Q9BSR8</id>
        <label>YIPF4</label>
    </interactant>
    <organismsDiffer>false</organismsDiffer>
    <experiments>3</experiments>
</comment>
<comment type="interaction">
    <interactant intactId="EBI-5235586">
        <id>Q8TBB6</id>
    </interactant>
    <interactant intactId="EBI-751210">
        <id>Q96EC8</id>
        <label>YIPF6</label>
    </interactant>
    <organismsDiffer>false</organismsDiffer>
    <experiments>4</experiments>
</comment>
<comment type="interaction">
    <interactant intactId="EBI-5235586">
        <id>Q8TBB6</id>
    </interactant>
    <interactant intactId="EBI-718439">
        <id>O95159</id>
        <label>ZFPL1</label>
    </interactant>
    <organismsDiffer>false</organismsDiffer>
    <experiments>3</experiments>
</comment>
<comment type="subcellular location">
    <subcellularLocation>
        <location evidence="5 6">Lysosome membrane</location>
        <topology evidence="3">Multi-pass membrane protein</topology>
    </subcellularLocation>
    <text evidence="1">Exhibits a punctated pattern in the cytoplasm, which partially ovelaps with lysosomes.</text>
</comment>
<comment type="tissue specificity">
    <text evidence="5">Expressed in skin fibroblasts.</text>
</comment>
<comment type="disease" evidence="6">
    <disease id="DI-04064">
        <name>Retinitis pigmentosa 68</name>
        <acronym>RP68</acronym>
        <description>A retinal dystrophy belonging to the group of pigmentary retinopathies. Retinitis pigmentosa is characterized by retinal pigment deposits visible on fundus examination and primary loss of rod photoreceptor cells followed by secondary loss of cone photoreceptors. Patients typically have night vision blindness and loss of midperipheral visual field. As their condition progresses, they lose their far peripheral visual field and eventually central vision as well.</description>
        <dbReference type="MIM" id="615725"/>
    </disease>
    <text>The disease is caused by variants affecting the gene represented in this entry.</text>
</comment>
<comment type="similarity">
    <text evidence="8">Belongs to the amino acid-polyamine-organocation (APC) superfamily. Cationic amino acid transporter (CAT) (TC 2.A.3.3) family.</text>
</comment>
<comment type="caution">
    <text evidence="2 5 6">Initially postulated to transport L-arginine based on studies with a chimeric protein, which was not confirmed by other groups using the wild-type protein. It was latter shown to rather function as a GABA importer.</text>
</comment>
<comment type="sequence caution" evidence="8">
    <conflict type="erroneous termination">
        <sequence resource="EMBL-CDS" id="BAB13439"/>
    </conflict>
    <text>Truncated C-terminus.</text>
</comment>
<gene>
    <name evidence="7 9" type="primary">SLC7A14</name>
    <name type="synonym">KIAA1613</name>
</gene>
<name>S7A14_HUMAN</name>
<accession>Q8TBB6</accession>
<accession>B3KV33</accession>
<accession>Q9HCF9</accession>
<organism>
    <name type="scientific">Homo sapiens</name>
    <name type="common">Human</name>
    <dbReference type="NCBI Taxonomy" id="9606"/>
    <lineage>
        <taxon>Eukaryota</taxon>
        <taxon>Metazoa</taxon>
        <taxon>Chordata</taxon>
        <taxon>Craniata</taxon>
        <taxon>Vertebrata</taxon>
        <taxon>Euteleostomi</taxon>
        <taxon>Mammalia</taxon>
        <taxon>Eutheria</taxon>
        <taxon>Euarchontoglires</taxon>
        <taxon>Primates</taxon>
        <taxon>Haplorrhini</taxon>
        <taxon>Catarrhini</taxon>
        <taxon>Hominidae</taxon>
        <taxon>Homo</taxon>
    </lineage>
</organism>
<sequence>MSGFFTSLDPRRVQWGAAWYAMHSRILRTKPVESMLEGTGTTTAHGTKLAQVLTTVDLISLGVGSCVGTGMYVVSGLVAKEMAGPGVIVSFIIAAVASILSGVCYAEFGVRVPKTTGSAYTYSYVTVGEFVAFFIGWNLILEYLIGTAAGASALSSMFDSLANHTISRWMADSVGTLNGLGKGEESYPDLLALLIAVIVTIIVALGVKNSIGFNNVLNVLNLAVWVFIMIAGLFFINGKYWAEGQFLPHGWSGVLQGAATCFYAFIGFDIIATTGEEAKNPNTSIPYAITASLVICLTAYVSVSVILTLMVPYYTIDTESPLMEMFVAHGFYAAKFVVAIGSVAGLTVSLLGSLFPMPRVIYAMAGDGLLFRFLAHVSSYTETPVVACIVSGFLAALLALLVSLRDLIEMMSIGTLLAYTLVSVCVLLLRYQPESDIDGFVKFLSEEHTKKKEGILADCEKEACSPVSEGDEFSGPATNTCGAKNLPSLGDNEMLIGKSDKSTYNVNHPNYGTVDMTTGIEADESENIYLIKLKKLIGPHYYTMRIRLGLPGKMDRPTAATGHTVTICVLLLFILMFIFCSFIIFGSDYISEQSWWAILLVVLMVLLISTLVFVILQQPENPKKLPYMAPCLPFVPAFAMLVNIYLMLKLSTITWIRFAVWCFVGLLIYFGYGIWNSTLEISAREEALHQSTYQRYDVDDPFSVEEGFSYATEGESQEDWGGPTEDKGFYYQQMSDAKANGRTSSKAKSKSKHKQNSEALIANDELDYSPE</sequence>
<evidence type="ECO:0000250" key="1"/>
<evidence type="ECO:0000250" key="2">
    <source>
        <dbReference type="UniProtKB" id="Q8BXR1"/>
    </source>
</evidence>
<evidence type="ECO:0000255" key="3"/>
<evidence type="ECO:0000256" key="4">
    <source>
        <dbReference type="SAM" id="MobiDB-lite"/>
    </source>
</evidence>
<evidence type="ECO:0000269" key="5">
    <source>
    </source>
</evidence>
<evidence type="ECO:0000269" key="6">
    <source>
    </source>
</evidence>
<evidence type="ECO:0000303" key="7">
    <source>
    </source>
</evidence>
<evidence type="ECO:0000305" key="8"/>
<evidence type="ECO:0000312" key="9">
    <source>
        <dbReference type="HGNC" id="HGNC:29326"/>
    </source>
</evidence>
<proteinExistence type="evidence at protein level"/>
<feature type="chain" id="PRO_0000307360" description="Solute carrier family 7 member 14">
    <location>
        <begin position="1"/>
        <end position="771"/>
    </location>
</feature>
<feature type="transmembrane region" description="Helical" evidence="3">
    <location>
        <begin position="58"/>
        <end position="78"/>
    </location>
</feature>
<feature type="transmembrane region" description="Helical" evidence="3">
    <location>
        <begin position="83"/>
        <end position="103"/>
    </location>
</feature>
<feature type="transmembrane region" description="Helical" evidence="3">
    <location>
        <begin position="119"/>
        <end position="141"/>
    </location>
</feature>
<feature type="transmembrane region" description="Helical" evidence="3">
    <location>
        <begin position="187"/>
        <end position="207"/>
    </location>
</feature>
<feature type="transmembrane region" description="Helical" evidence="3">
    <location>
        <begin position="216"/>
        <end position="236"/>
    </location>
</feature>
<feature type="transmembrane region" description="Helical" evidence="3">
    <location>
        <begin position="251"/>
        <end position="271"/>
    </location>
</feature>
<feature type="transmembrane region" description="Helical" evidence="3">
    <location>
        <begin position="291"/>
        <end position="311"/>
    </location>
</feature>
<feature type="transmembrane region" description="Helical" evidence="3">
    <location>
        <begin position="336"/>
        <end position="356"/>
    </location>
</feature>
<feature type="transmembrane region" description="Helical" evidence="3">
    <location>
        <begin position="360"/>
        <end position="380"/>
    </location>
</feature>
<feature type="transmembrane region" description="Helical" evidence="3">
    <location>
        <begin position="384"/>
        <end position="404"/>
    </location>
</feature>
<feature type="transmembrane region" description="Helical" evidence="3">
    <location>
        <begin position="407"/>
        <end position="427"/>
    </location>
</feature>
<feature type="transmembrane region" description="Helical" evidence="3">
    <location>
        <begin position="565"/>
        <end position="585"/>
    </location>
</feature>
<feature type="transmembrane region" description="Helical" evidence="3">
    <location>
        <begin position="596"/>
        <end position="616"/>
    </location>
</feature>
<feature type="transmembrane region" description="Helical" evidence="3">
    <location>
        <begin position="628"/>
        <end position="648"/>
    </location>
</feature>
<feature type="transmembrane region" description="Helical" evidence="3">
    <location>
        <begin position="655"/>
        <end position="675"/>
    </location>
</feature>
<feature type="region of interest" description="Disordered" evidence="4">
    <location>
        <begin position="736"/>
        <end position="771"/>
    </location>
</feature>
<feature type="compositionally biased region" description="Basic residues" evidence="4">
    <location>
        <begin position="745"/>
        <end position="754"/>
    </location>
</feature>
<feature type="modified residue" description="Phosphoserine" evidence="2">
    <location>
        <position position="465"/>
    </location>
</feature>
<feature type="modified residue" description="Phosphoserine" evidence="2">
    <location>
        <position position="468"/>
    </location>
</feature>
<feature type="modified residue" description="Phosphoserine" evidence="2">
    <location>
        <position position="488"/>
    </location>
</feature>
<feature type="modified residue" description="Phosphoserine" evidence="2">
    <location>
        <position position="757"/>
    </location>
</feature>
<feature type="modified residue" description="Phosphoserine" evidence="2">
    <location>
        <position position="769"/>
    </location>
</feature>
<feature type="glycosylation site" description="N-linked (GlcNAc...) asparagine" evidence="3">
    <location>
        <position position="282"/>
    </location>
</feature>
<feature type="glycosylation site" description="N-linked (GlcNAc...) asparagine" evidence="3">
    <location>
        <position position="676"/>
    </location>
</feature>
<feature type="sequence variant" id="VAR_071050" description="In RP68; dbSNP:rs587777273." evidence="6">
    <original>A</original>
    <variation>V</variation>
    <location>
        <position position="132"/>
    </location>
</feature>
<feature type="sequence variant" id="VAR_071051" description="In RP68; uncertain significance; dbSNP:rs765054383." evidence="6">
    <original>N</original>
    <variation>S</variation>
    <location>
        <position position="209"/>
    </location>
</feature>
<feature type="sequence variant" id="VAR_071052" description="In RP68; uncertain significance." evidence="6">
    <original>M</original>
    <variation>I</variation>
    <location>
        <position position="323"/>
    </location>
</feature>
<feature type="sequence variant" id="VAR_035417" description="In RP68; affects subcellular location; dbSNP:rs2276717." evidence="6">
    <original>G</original>
    <variation>R</variation>
    <location>
        <position position="330"/>
    </location>
</feature>
<feature type="sequence variant" id="VAR_071053" description="In RP68; uncertain significance; dbSNP:rs375705180." evidence="6">
    <original>S</original>
    <variation>L</variation>
    <location>
        <position position="391"/>
    </location>
</feature>
<feature type="sequence variant" id="VAR_071054" description="In RP68; dbSNP:rs79668755." evidence="6">
    <original>C</original>
    <variation>F</variation>
    <location>
        <position position="464"/>
    </location>
</feature>
<feature type="sequence variant" id="VAR_071055" description="In RP68; uncertain significance; dbSNP:rs181011740." evidence="6">
    <original>R</original>
    <variation>C</variation>
    <location>
        <position position="695"/>
    </location>
</feature>
<feature type="sequence variant" id="VAR_071056" description="In RP68; dbSNP:rs587777272." evidence="6">
    <original>F</original>
    <variation>V</variation>
    <location>
        <position position="708"/>
    </location>
</feature>
<feature type="sequence conflict" description="In Ref. 1; BAG53645." evidence="8" ref="1">
    <original>K</original>
    <variation>R</variation>
    <location>
        <position position="498"/>
    </location>
</feature>
<reference key="1">
    <citation type="journal article" date="2004" name="Nat. Genet.">
        <title>Complete sequencing and characterization of 21,243 full-length human cDNAs.</title>
        <authorList>
            <person name="Ota T."/>
            <person name="Suzuki Y."/>
            <person name="Nishikawa T."/>
            <person name="Otsuki T."/>
            <person name="Sugiyama T."/>
            <person name="Irie R."/>
            <person name="Wakamatsu A."/>
            <person name="Hayashi K."/>
            <person name="Sato H."/>
            <person name="Nagai K."/>
            <person name="Kimura K."/>
            <person name="Makita H."/>
            <person name="Sekine M."/>
            <person name="Obayashi M."/>
            <person name="Nishi T."/>
            <person name="Shibahara T."/>
            <person name="Tanaka T."/>
            <person name="Ishii S."/>
            <person name="Yamamoto J."/>
            <person name="Saito K."/>
            <person name="Kawai Y."/>
            <person name="Isono Y."/>
            <person name="Nakamura Y."/>
            <person name="Nagahari K."/>
            <person name="Murakami K."/>
            <person name="Yasuda T."/>
            <person name="Iwayanagi T."/>
            <person name="Wagatsuma M."/>
            <person name="Shiratori A."/>
            <person name="Sudo H."/>
            <person name="Hosoiri T."/>
            <person name="Kaku Y."/>
            <person name="Kodaira H."/>
            <person name="Kondo H."/>
            <person name="Sugawara M."/>
            <person name="Takahashi M."/>
            <person name="Kanda K."/>
            <person name="Yokoi T."/>
            <person name="Furuya T."/>
            <person name="Kikkawa E."/>
            <person name="Omura Y."/>
            <person name="Abe K."/>
            <person name="Kamihara K."/>
            <person name="Katsuta N."/>
            <person name="Sato K."/>
            <person name="Tanikawa M."/>
            <person name="Yamazaki M."/>
            <person name="Ninomiya K."/>
            <person name="Ishibashi T."/>
            <person name="Yamashita H."/>
            <person name="Murakawa K."/>
            <person name="Fujimori K."/>
            <person name="Tanai H."/>
            <person name="Kimata M."/>
            <person name="Watanabe M."/>
            <person name="Hiraoka S."/>
            <person name="Chiba Y."/>
            <person name="Ishida S."/>
            <person name="Ono Y."/>
            <person name="Takiguchi S."/>
            <person name="Watanabe S."/>
            <person name="Yosida M."/>
            <person name="Hotuta T."/>
            <person name="Kusano J."/>
            <person name="Kanehori K."/>
            <person name="Takahashi-Fujii A."/>
            <person name="Hara H."/>
            <person name="Tanase T.-O."/>
            <person name="Nomura Y."/>
            <person name="Togiya S."/>
            <person name="Komai F."/>
            <person name="Hara R."/>
            <person name="Takeuchi K."/>
            <person name="Arita M."/>
            <person name="Imose N."/>
            <person name="Musashino K."/>
            <person name="Yuuki H."/>
            <person name="Oshima A."/>
            <person name="Sasaki N."/>
            <person name="Aotsuka S."/>
            <person name="Yoshikawa Y."/>
            <person name="Matsunawa H."/>
            <person name="Ichihara T."/>
            <person name="Shiohata N."/>
            <person name="Sano S."/>
            <person name="Moriya S."/>
            <person name="Momiyama H."/>
            <person name="Satoh N."/>
            <person name="Takami S."/>
            <person name="Terashima Y."/>
            <person name="Suzuki O."/>
            <person name="Nakagawa S."/>
            <person name="Senoh A."/>
            <person name="Mizoguchi H."/>
            <person name="Goto Y."/>
            <person name="Shimizu F."/>
            <person name="Wakebe H."/>
            <person name="Hishigaki H."/>
            <person name="Watanabe T."/>
            <person name="Sugiyama A."/>
            <person name="Takemoto M."/>
            <person name="Kawakami B."/>
            <person name="Yamazaki M."/>
            <person name="Watanabe K."/>
            <person name="Kumagai A."/>
            <person name="Itakura S."/>
            <person name="Fukuzumi Y."/>
            <person name="Fujimori Y."/>
            <person name="Komiyama M."/>
            <person name="Tashiro H."/>
            <person name="Tanigami A."/>
            <person name="Fujiwara T."/>
            <person name="Ono T."/>
            <person name="Yamada K."/>
            <person name="Fujii Y."/>
            <person name="Ozaki K."/>
            <person name="Hirao M."/>
            <person name="Ohmori Y."/>
            <person name="Kawabata A."/>
            <person name="Hikiji T."/>
            <person name="Kobatake N."/>
            <person name="Inagaki H."/>
            <person name="Ikema Y."/>
            <person name="Okamoto S."/>
            <person name="Okitani R."/>
            <person name="Kawakami T."/>
            <person name="Noguchi S."/>
            <person name="Itoh T."/>
            <person name="Shigeta K."/>
            <person name="Senba T."/>
            <person name="Matsumura K."/>
            <person name="Nakajima Y."/>
            <person name="Mizuno T."/>
            <person name="Morinaga M."/>
            <person name="Sasaki M."/>
            <person name="Togashi T."/>
            <person name="Oyama M."/>
            <person name="Hata H."/>
            <person name="Watanabe M."/>
            <person name="Komatsu T."/>
            <person name="Mizushima-Sugano J."/>
            <person name="Satoh T."/>
            <person name="Shirai Y."/>
            <person name="Takahashi Y."/>
            <person name="Nakagawa K."/>
            <person name="Okumura K."/>
            <person name="Nagase T."/>
            <person name="Nomura N."/>
            <person name="Kikuchi H."/>
            <person name="Masuho Y."/>
            <person name="Yamashita R."/>
            <person name="Nakai K."/>
            <person name="Yada T."/>
            <person name="Nakamura Y."/>
            <person name="Ohara O."/>
            <person name="Isogai T."/>
            <person name="Sugano S."/>
        </authorList>
    </citation>
    <scope>NUCLEOTIDE SEQUENCE [LARGE SCALE MRNA]</scope>
</reference>
<reference key="2">
    <citation type="journal article" date="2006" name="Nature">
        <title>The DNA sequence, annotation and analysis of human chromosome 3.</title>
        <authorList>
            <person name="Muzny D.M."/>
            <person name="Scherer S.E."/>
            <person name="Kaul R."/>
            <person name="Wang J."/>
            <person name="Yu J."/>
            <person name="Sudbrak R."/>
            <person name="Buhay C.J."/>
            <person name="Chen R."/>
            <person name="Cree A."/>
            <person name="Ding Y."/>
            <person name="Dugan-Rocha S."/>
            <person name="Gill R."/>
            <person name="Gunaratne P."/>
            <person name="Harris R.A."/>
            <person name="Hawes A.C."/>
            <person name="Hernandez J."/>
            <person name="Hodgson A.V."/>
            <person name="Hume J."/>
            <person name="Jackson A."/>
            <person name="Khan Z.M."/>
            <person name="Kovar-Smith C."/>
            <person name="Lewis L.R."/>
            <person name="Lozado R.J."/>
            <person name="Metzker M.L."/>
            <person name="Milosavljevic A."/>
            <person name="Miner G.R."/>
            <person name="Morgan M.B."/>
            <person name="Nazareth L.V."/>
            <person name="Scott G."/>
            <person name="Sodergren E."/>
            <person name="Song X.-Z."/>
            <person name="Steffen D."/>
            <person name="Wei S."/>
            <person name="Wheeler D.A."/>
            <person name="Wright M.W."/>
            <person name="Worley K.C."/>
            <person name="Yuan Y."/>
            <person name="Zhang Z."/>
            <person name="Adams C.Q."/>
            <person name="Ansari-Lari M.A."/>
            <person name="Ayele M."/>
            <person name="Brown M.J."/>
            <person name="Chen G."/>
            <person name="Chen Z."/>
            <person name="Clendenning J."/>
            <person name="Clerc-Blankenburg K.P."/>
            <person name="Chen R."/>
            <person name="Chen Z."/>
            <person name="Davis C."/>
            <person name="Delgado O."/>
            <person name="Dinh H.H."/>
            <person name="Dong W."/>
            <person name="Draper H."/>
            <person name="Ernst S."/>
            <person name="Fu G."/>
            <person name="Gonzalez-Garay M.L."/>
            <person name="Garcia D.K."/>
            <person name="Gillett W."/>
            <person name="Gu J."/>
            <person name="Hao B."/>
            <person name="Haugen E."/>
            <person name="Havlak P."/>
            <person name="He X."/>
            <person name="Hennig S."/>
            <person name="Hu S."/>
            <person name="Huang W."/>
            <person name="Jackson L.R."/>
            <person name="Jacob L.S."/>
            <person name="Kelly S.H."/>
            <person name="Kube M."/>
            <person name="Levy R."/>
            <person name="Li Z."/>
            <person name="Liu B."/>
            <person name="Liu J."/>
            <person name="Liu W."/>
            <person name="Lu J."/>
            <person name="Maheshwari M."/>
            <person name="Nguyen B.-V."/>
            <person name="Okwuonu G.O."/>
            <person name="Palmeiri A."/>
            <person name="Pasternak S."/>
            <person name="Perez L.M."/>
            <person name="Phelps K.A."/>
            <person name="Plopper F.J."/>
            <person name="Qiang B."/>
            <person name="Raymond C."/>
            <person name="Rodriguez R."/>
            <person name="Saenphimmachak C."/>
            <person name="Santibanez J."/>
            <person name="Shen H."/>
            <person name="Shen Y."/>
            <person name="Subramanian S."/>
            <person name="Tabor P.E."/>
            <person name="Verduzco D."/>
            <person name="Waldron L."/>
            <person name="Wang J."/>
            <person name="Wang J."/>
            <person name="Wang Q."/>
            <person name="Williams G.A."/>
            <person name="Wong G.K.-S."/>
            <person name="Yao Z."/>
            <person name="Zhang J."/>
            <person name="Zhang X."/>
            <person name="Zhao G."/>
            <person name="Zhou J."/>
            <person name="Zhou Y."/>
            <person name="Nelson D."/>
            <person name="Lehrach H."/>
            <person name="Reinhardt R."/>
            <person name="Naylor S.L."/>
            <person name="Yang H."/>
            <person name="Olson M."/>
            <person name="Weinstock G."/>
            <person name="Gibbs R.A."/>
        </authorList>
    </citation>
    <scope>NUCLEOTIDE SEQUENCE [LARGE SCALE GENOMIC DNA]</scope>
</reference>
<reference key="3">
    <citation type="journal article" date="2004" name="Genome Res.">
        <title>The status, quality, and expansion of the NIH full-length cDNA project: the Mammalian Gene Collection (MGC).</title>
        <authorList>
            <consortium name="The MGC Project Team"/>
        </authorList>
    </citation>
    <scope>NUCLEOTIDE SEQUENCE [LARGE SCALE MRNA] OF 24-771</scope>
    <source>
        <tissue>Brain</tissue>
    </source>
</reference>
<reference key="4">
    <citation type="journal article" date="2000" name="DNA Res.">
        <title>Prediction of the coding sequences of unidentified human genes. XVIII. The complete sequences of 100 new cDNA clones from brain which code for large proteins in vitro.</title>
        <authorList>
            <person name="Nagase T."/>
            <person name="Kikuno R."/>
            <person name="Nakayama M."/>
            <person name="Hirosawa M."/>
            <person name="Ohara O."/>
        </authorList>
    </citation>
    <scope>NUCLEOTIDE SEQUENCE [LARGE SCALE MRNA] OF 79-771</scope>
    <source>
        <tissue>Brain</tissue>
    </source>
</reference>
<reference key="5">
    <citation type="journal article" date="2012" name="J. Biol. Chem.">
        <title>A chimera carrying the functional domain of the orphan protein SLC7A14 in the backbone of SLC7A2 mediates trans-stimulated arginine transport.</title>
        <authorList>
            <person name="Jaenecke I."/>
            <person name="Boissel J.P."/>
            <person name="Lemke M."/>
            <person name="Rupp J."/>
            <person name="Gasnier B."/>
            <person name="Closs E.I."/>
        </authorList>
    </citation>
    <scope>SUBCELLULAR LOCATION</scope>
    <scope>TISSUE SPECIFICITY</scope>
    <scope>CAUTION</scope>
</reference>
<reference key="6">
    <citation type="journal article" date="2014" name="Nat. Commun.">
        <title>SLC7A14 linked to autosomal recessive retinitis pigmentosa.</title>
        <authorList>
            <person name="Jin Z.B."/>
            <person name="Huang X.F."/>
            <person name="Lv J.N."/>
            <person name="Xiang L."/>
            <person name="Li D.Q."/>
            <person name="Chen J."/>
            <person name="Huang C."/>
            <person name="Wu J."/>
            <person name="Lu F."/>
            <person name="Qu J."/>
        </authorList>
    </citation>
    <scope>VARIANTS RP68 VAL-132; SER-209; ILE-323; ARG-330; LEU-391; PHE-464; CYS-695 AND VAL-708</scope>
    <scope>SUBCELLULAR LOCATION</scope>
    <scope>CAUTION</scope>
</reference>
<protein>
    <recommendedName>
        <fullName>Solute carrier family 7 member 14</fullName>
    </recommendedName>
    <alternativeName>
        <fullName evidence="2">Gamma-aminobutyric acid transporter SLC7A14</fullName>
    </alternativeName>
</protein>